<reference key="1">
    <citation type="journal article" date="2006" name="Genome Res.">
        <title>Skewed genomic variability in strains of the toxigenic bacterial pathogen, Clostridium perfringens.</title>
        <authorList>
            <person name="Myers G.S.A."/>
            <person name="Rasko D.A."/>
            <person name="Cheung J.K."/>
            <person name="Ravel J."/>
            <person name="Seshadri R."/>
            <person name="DeBoy R.T."/>
            <person name="Ren Q."/>
            <person name="Varga J."/>
            <person name="Awad M.M."/>
            <person name="Brinkac L.M."/>
            <person name="Daugherty S.C."/>
            <person name="Haft D.H."/>
            <person name="Dodson R.J."/>
            <person name="Madupu R."/>
            <person name="Nelson W.C."/>
            <person name="Rosovitz M.J."/>
            <person name="Sullivan S.A."/>
            <person name="Khouri H."/>
            <person name="Dimitrov G.I."/>
            <person name="Watkins K.L."/>
            <person name="Mulligan S."/>
            <person name="Benton J."/>
            <person name="Radune D."/>
            <person name="Fisher D.J."/>
            <person name="Atkins H.S."/>
            <person name="Hiscox T."/>
            <person name="Jost B.H."/>
            <person name="Billington S.J."/>
            <person name="Songer J.G."/>
            <person name="McClane B.A."/>
            <person name="Titball R.W."/>
            <person name="Rood J.I."/>
            <person name="Melville S.B."/>
            <person name="Paulsen I.T."/>
        </authorList>
    </citation>
    <scope>NUCLEOTIDE SEQUENCE [LARGE SCALE GENOMIC DNA]</scope>
    <source>
        <strain>ATCC 13124 / DSM 756 / JCM 1290 / NCIMB 6125 / NCTC 8237 / S 107 / Type A</strain>
    </source>
</reference>
<keyword id="KW-0067">ATP-binding</keyword>
<keyword id="KW-0436">Ligase</keyword>
<keyword id="KW-0547">Nucleotide-binding</keyword>
<keyword id="KW-0554">One-carbon metabolism</keyword>
<protein>
    <recommendedName>
        <fullName evidence="1">Formate--tetrahydrofolate ligase</fullName>
        <ecNumber evidence="1">6.3.4.3</ecNumber>
    </recommendedName>
    <alternativeName>
        <fullName evidence="1">Formyltetrahydrofolate synthetase</fullName>
        <shortName evidence="1">FHS</shortName>
        <shortName evidence="1">FTHFS</shortName>
    </alternativeName>
</protein>
<accession>Q0TMI3</accession>
<sequence length="556" mass="60267">MKNDIEIAQSAKMEPIINIAKKIGLGEDDIELYGKYKCKISLDAIKKLENNKDGKLVLVTAINPTPAGEGKSTVTVGLGQALNKIGKNTVIALREPSLGPVFGIKGGAAGGGYAQVVPMEDINLHFTGDMHAITSANNLLCAAIDNHIHQGNLLRIDSRRIVFKRVMDMNDRALRNIVVGMGGKINGFLREDGFMITVASEIMAILCMASDLEDLKERMGNILIAYNLDGEPVYAKELEVQGAMALLMKDAIKPNLVQTLENTPAIIHGGPFANIAHGCNSIIATKTALKMSDITITEAGFGADLGAEKFLDIKCRYGNLNPDCVVLVATIRALKHHGGVKKDELNISNVDALNKGMKNLEKQIENIKAYGVPVVVAINKFITDSDEEVKAIEDFCKNIGVEVSLTEVWEKGGEGGIDLANKVIKTMETEPSNFKMIYDSEESINDKILKIVQTIYGGKGVNYTPQALKQIAEIEKFNLDKLPICMAKTQYSLSDNPSLLGRPENFDITVREVRVSNGAGFIVVLTGDVMTMPGLPKVPAANRMDIKDNGEIVGLF</sequence>
<feature type="chain" id="PRO_0000300520" description="Formate--tetrahydrofolate ligase">
    <location>
        <begin position="1"/>
        <end position="556"/>
    </location>
</feature>
<feature type="binding site" evidence="1">
    <location>
        <begin position="65"/>
        <end position="72"/>
    </location>
    <ligand>
        <name>ATP</name>
        <dbReference type="ChEBI" id="CHEBI:30616"/>
    </ligand>
</feature>
<name>FTHS_CLOP1</name>
<comment type="catalytic activity">
    <reaction evidence="1">
        <text>(6S)-5,6,7,8-tetrahydrofolate + formate + ATP = (6R)-10-formyltetrahydrofolate + ADP + phosphate</text>
        <dbReference type="Rhea" id="RHEA:20221"/>
        <dbReference type="ChEBI" id="CHEBI:15740"/>
        <dbReference type="ChEBI" id="CHEBI:30616"/>
        <dbReference type="ChEBI" id="CHEBI:43474"/>
        <dbReference type="ChEBI" id="CHEBI:57453"/>
        <dbReference type="ChEBI" id="CHEBI:195366"/>
        <dbReference type="ChEBI" id="CHEBI:456216"/>
        <dbReference type="EC" id="6.3.4.3"/>
    </reaction>
</comment>
<comment type="pathway">
    <text evidence="1">One-carbon metabolism; tetrahydrofolate interconversion.</text>
</comment>
<comment type="similarity">
    <text evidence="1">Belongs to the formate--tetrahydrofolate ligase family.</text>
</comment>
<organism>
    <name type="scientific">Clostridium perfringens (strain ATCC 13124 / DSM 756 / JCM 1290 / NCIMB 6125 / NCTC 8237 / Type A)</name>
    <dbReference type="NCBI Taxonomy" id="195103"/>
    <lineage>
        <taxon>Bacteria</taxon>
        <taxon>Bacillati</taxon>
        <taxon>Bacillota</taxon>
        <taxon>Clostridia</taxon>
        <taxon>Eubacteriales</taxon>
        <taxon>Clostridiaceae</taxon>
        <taxon>Clostridium</taxon>
    </lineage>
</organism>
<evidence type="ECO:0000255" key="1">
    <source>
        <dbReference type="HAMAP-Rule" id="MF_01543"/>
    </source>
</evidence>
<gene>
    <name evidence="1" type="primary">fhs</name>
    <name type="ordered locus">CPF_2785</name>
</gene>
<dbReference type="EC" id="6.3.4.3" evidence="1"/>
<dbReference type="EMBL" id="CP000246">
    <property type="protein sequence ID" value="ABG83765.1"/>
    <property type="molecule type" value="Genomic_DNA"/>
</dbReference>
<dbReference type="RefSeq" id="WP_003470195.1">
    <property type="nucleotide sequence ID" value="NC_008261.1"/>
</dbReference>
<dbReference type="SMR" id="Q0TMI3"/>
<dbReference type="STRING" id="195103.CPF_2785"/>
<dbReference type="PaxDb" id="195103-CPF_2785"/>
<dbReference type="KEGG" id="cpf:CPF_2785"/>
<dbReference type="eggNOG" id="COG2759">
    <property type="taxonomic scope" value="Bacteria"/>
</dbReference>
<dbReference type="HOGENOM" id="CLU_003601_3_3_9"/>
<dbReference type="BRENDA" id="6.3.4.3">
    <property type="organism ID" value="1503"/>
</dbReference>
<dbReference type="UniPathway" id="UPA00193"/>
<dbReference type="Proteomes" id="UP000001823">
    <property type="component" value="Chromosome"/>
</dbReference>
<dbReference type="GO" id="GO:0005524">
    <property type="term" value="F:ATP binding"/>
    <property type="evidence" value="ECO:0007669"/>
    <property type="project" value="UniProtKB-UniRule"/>
</dbReference>
<dbReference type="GO" id="GO:0004329">
    <property type="term" value="F:formate-tetrahydrofolate ligase activity"/>
    <property type="evidence" value="ECO:0007669"/>
    <property type="project" value="UniProtKB-UniRule"/>
</dbReference>
<dbReference type="GO" id="GO:0035999">
    <property type="term" value="P:tetrahydrofolate interconversion"/>
    <property type="evidence" value="ECO:0007669"/>
    <property type="project" value="UniProtKB-UniRule"/>
</dbReference>
<dbReference type="CDD" id="cd00477">
    <property type="entry name" value="FTHFS"/>
    <property type="match status" value="1"/>
</dbReference>
<dbReference type="FunFam" id="3.30.1510.10:FF:000001">
    <property type="entry name" value="Formate--tetrahydrofolate ligase"/>
    <property type="match status" value="1"/>
</dbReference>
<dbReference type="FunFam" id="3.10.410.10:FF:000001">
    <property type="entry name" value="Putative formate--tetrahydrofolate ligase"/>
    <property type="match status" value="1"/>
</dbReference>
<dbReference type="Gene3D" id="3.30.1510.10">
    <property type="entry name" value="Domain 2, N(10)-formyltetrahydrofolate synthetase"/>
    <property type="match status" value="1"/>
</dbReference>
<dbReference type="Gene3D" id="3.10.410.10">
    <property type="entry name" value="Formyltetrahydrofolate synthetase, domain 3"/>
    <property type="match status" value="1"/>
</dbReference>
<dbReference type="Gene3D" id="3.40.50.300">
    <property type="entry name" value="P-loop containing nucleotide triphosphate hydrolases"/>
    <property type="match status" value="1"/>
</dbReference>
<dbReference type="HAMAP" id="MF_01543">
    <property type="entry name" value="FTHFS"/>
    <property type="match status" value="1"/>
</dbReference>
<dbReference type="InterPro" id="IPR000559">
    <property type="entry name" value="Formate_THF_ligase"/>
</dbReference>
<dbReference type="InterPro" id="IPR020628">
    <property type="entry name" value="Formate_THF_ligase_CS"/>
</dbReference>
<dbReference type="InterPro" id="IPR027417">
    <property type="entry name" value="P-loop_NTPase"/>
</dbReference>
<dbReference type="NCBIfam" id="NF010030">
    <property type="entry name" value="PRK13505.1"/>
    <property type="match status" value="1"/>
</dbReference>
<dbReference type="Pfam" id="PF01268">
    <property type="entry name" value="FTHFS"/>
    <property type="match status" value="1"/>
</dbReference>
<dbReference type="SUPFAM" id="SSF52540">
    <property type="entry name" value="P-loop containing nucleoside triphosphate hydrolases"/>
    <property type="match status" value="1"/>
</dbReference>
<dbReference type="PROSITE" id="PS00721">
    <property type="entry name" value="FTHFS_1"/>
    <property type="match status" value="1"/>
</dbReference>
<dbReference type="PROSITE" id="PS00722">
    <property type="entry name" value="FTHFS_2"/>
    <property type="match status" value="1"/>
</dbReference>
<proteinExistence type="inferred from homology"/>